<name>ISPH_LEPIN</name>
<accession>Q8F3I3</accession>
<protein>
    <recommendedName>
        <fullName evidence="1">4-hydroxy-3-methylbut-2-enyl diphosphate reductase</fullName>
        <shortName evidence="1">HMBPP reductase</shortName>
        <ecNumber evidence="1">1.17.7.4</ecNumber>
    </recommendedName>
</protein>
<dbReference type="EC" id="1.17.7.4" evidence="1"/>
<dbReference type="EMBL" id="AE010300">
    <property type="protein sequence ID" value="AAN49619.2"/>
    <property type="molecule type" value="Genomic_DNA"/>
</dbReference>
<dbReference type="RefSeq" id="NP_712601.2">
    <property type="nucleotide sequence ID" value="NC_004342.2"/>
</dbReference>
<dbReference type="RefSeq" id="WP_000890370.1">
    <property type="nucleotide sequence ID" value="NC_004342.2"/>
</dbReference>
<dbReference type="SMR" id="Q8F3I3"/>
<dbReference type="FunCoup" id="Q8F3I3">
    <property type="interactions" value="399"/>
</dbReference>
<dbReference type="STRING" id="189518.LA_2420"/>
<dbReference type="PaxDb" id="189518-LA_2420"/>
<dbReference type="EnsemblBacteria" id="AAN49619">
    <property type="protein sequence ID" value="AAN49619"/>
    <property type="gene ID" value="LA_2420"/>
</dbReference>
<dbReference type="GeneID" id="61144828"/>
<dbReference type="KEGG" id="lil:LA_2420"/>
<dbReference type="PATRIC" id="fig|189518.3.peg.2400"/>
<dbReference type="HOGENOM" id="CLU_027486_1_0_12"/>
<dbReference type="InParanoid" id="Q8F3I3"/>
<dbReference type="OrthoDB" id="9777362at2"/>
<dbReference type="UniPathway" id="UPA00056">
    <property type="reaction ID" value="UER00097"/>
</dbReference>
<dbReference type="UniPathway" id="UPA00059">
    <property type="reaction ID" value="UER00105"/>
</dbReference>
<dbReference type="Proteomes" id="UP000001408">
    <property type="component" value="Chromosome I"/>
</dbReference>
<dbReference type="GO" id="GO:0005829">
    <property type="term" value="C:cytosol"/>
    <property type="evidence" value="ECO:0000318"/>
    <property type="project" value="GO_Central"/>
</dbReference>
<dbReference type="GO" id="GO:0051539">
    <property type="term" value="F:4 iron, 4 sulfur cluster binding"/>
    <property type="evidence" value="ECO:0007669"/>
    <property type="project" value="UniProtKB-UniRule"/>
</dbReference>
<dbReference type="GO" id="GO:0051745">
    <property type="term" value="F:4-hydroxy-3-methylbut-2-enyl diphosphate reductase activity"/>
    <property type="evidence" value="ECO:0000318"/>
    <property type="project" value="GO_Central"/>
</dbReference>
<dbReference type="GO" id="GO:0046872">
    <property type="term" value="F:metal ion binding"/>
    <property type="evidence" value="ECO:0007669"/>
    <property type="project" value="UniProtKB-KW"/>
</dbReference>
<dbReference type="GO" id="GO:0050992">
    <property type="term" value="P:dimethylallyl diphosphate biosynthetic process"/>
    <property type="evidence" value="ECO:0007669"/>
    <property type="project" value="UniProtKB-UniRule"/>
</dbReference>
<dbReference type="GO" id="GO:0019288">
    <property type="term" value="P:isopentenyl diphosphate biosynthetic process, methylerythritol 4-phosphate pathway"/>
    <property type="evidence" value="ECO:0000318"/>
    <property type="project" value="GO_Central"/>
</dbReference>
<dbReference type="GO" id="GO:0016114">
    <property type="term" value="P:terpenoid biosynthetic process"/>
    <property type="evidence" value="ECO:0007669"/>
    <property type="project" value="UniProtKB-UniRule"/>
</dbReference>
<dbReference type="CDD" id="cd13944">
    <property type="entry name" value="lytB_ispH"/>
    <property type="match status" value="1"/>
</dbReference>
<dbReference type="Gene3D" id="3.40.50.11270">
    <property type="match status" value="1"/>
</dbReference>
<dbReference type="Gene3D" id="3.40.1010.20">
    <property type="entry name" value="4-hydroxy-3-methylbut-2-enyl diphosphate reductase, catalytic domain"/>
    <property type="match status" value="2"/>
</dbReference>
<dbReference type="HAMAP" id="MF_00191">
    <property type="entry name" value="IspH"/>
    <property type="match status" value="1"/>
</dbReference>
<dbReference type="InterPro" id="IPR003451">
    <property type="entry name" value="LytB/IspH"/>
</dbReference>
<dbReference type="NCBIfam" id="TIGR00216">
    <property type="entry name" value="ispH_lytB"/>
    <property type="match status" value="1"/>
</dbReference>
<dbReference type="PANTHER" id="PTHR30426">
    <property type="entry name" value="4-HYDROXY-3-METHYLBUT-2-ENYL DIPHOSPHATE REDUCTASE"/>
    <property type="match status" value="1"/>
</dbReference>
<dbReference type="PANTHER" id="PTHR30426:SF0">
    <property type="entry name" value="4-HYDROXY-3-METHYLBUT-2-ENYL DIPHOSPHATE REDUCTASE"/>
    <property type="match status" value="1"/>
</dbReference>
<dbReference type="Pfam" id="PF02401">
    <property type="entry name" value="LYTB"/>
    <property type="match status" value="1"/>
</dbReference>
<comment type="function">
    <text evidence="1">Catalyzes the conversion of 1-hydroxy-2-methyl-2-(E)-butenyl 4-diphosphate (HMBPP) into a mixture of isopentenyl diphosphate (IPP) and dimethylallyl diphosphate (DMAPP). Acts in the terminal step of the DOXP/MEP pathway for isoprenoid precursor biosynthesis.</text>
</comment>
<comment type="catalytic activity">
    <reaction evidence="1">
        <text>isopentenyl diphosphate + 2 oxidized [2Fe-2S]-[ferredoxin] + H2O = (2E)-4-hydroxy-3-methylbut-2-enyl diphosphate + 2 reduced [2Fe-2S]-[ferredoxin] + 2 H(+)</text>
        <dbReference type="Rhea" id="RHEA:24488"/>
        <dbReference type="Rhea" id="RHEA-COMP:10000"/>
        <dbReference type="Rhea" id="RHEA-COMP:10001"/>
        <dbReference type="ChEBI" id="CHEBI:15377"/>
        <dbReference type="ChEBI" id="CHEBI:15378"/>
        <dbReference type="ChEBI" id="CHEBI:33737"/>
        <dbReference type="ChEBI" id="CHEBI:33738"/>
        <dbReference type="ChEBI" id="CHEBI:128753"/>
        <dbReference type="ChEBI" id="CHEBI:128769"/>
        <dbReference type="EC" id="1.17.7.4"/>
    </reaction>
</comment>
<comment type="catalytic activity">
    <reaction evidence="1">
        <text>dimethylallyl diphosphate + 2 oxidized [2Fe-2S]-[ferredoxin] + H2O = (2E)-4-hydroxy-3-methylbut-2-enyl diphosphate + 2 reduced [2Fe-2S]-[ferredoxin] + 2 H(+)</text>
        <dbReference type="Rhea" id="RHEA:24825"/>
        <dbReference type="Rhea" id="RHEA-COMP:10000"/>
        <dbReference type="Rhea" id="RHEA-COMP:10001"/>
        <dbReference type="ChEBI" id="CHEBI:15377"/>
        <dbReference type="ChEBI" id="CHEBI:15378"/>
        <dbReference type="ChEBI" id="CHEBI:33737"/>
        <dbReference type="ChEBI" id="CHEBI:33738"/>
        <dbReference type="ChEBI" id="CHEBI:57623"/>
        <dbReference type="ChEBI" id="CHEBI:128753"/>
        <dbReference type="EC" id="1.17.7.4"/>
    </reaction>
</comment>
<comment type="cofactor">
    <cofactor evidence="1">
        <name>[4Fe-4S] cluster</name>
        <dbReference type="ChEBI" id="CHEBI:49883"/>
    </cofactor>
    <text evidence="1">Binds 1 [4Fe-4S] cluster per subunit.</text>
</comment>
<comment type="pathway">
    <text evidence="1">Isoprenoid biosynthesis; dimethylallyl diphosphate biosynthesis; dimethylallyl diphosphate from (2E)-4-hydroxy-3-methylbutenyl diphosphate: step 1/1.</text>
</comment>
<comment type="pathway">
    <text evidence="1">Isoprenoid biosynthesis; isopentenyl diphosphate biosynthesis via DXP pathway; isopentenyl diphosphate from 1-deoxy-D-xylulose 5-phosphate: step 6/6.</text>
</comment>
<comment type="similarity">
    <text evidence="1">Belongs to the IspH family.</text>
</comment>
<evidence type="ECO:0000255" key="1">
    <source>
        <dbReference type="HAMAP-Rule" id="MF_00191"/>
    </source>
</evidence>
<sequence length="312" mass="34740">MLEKIYLANPRGFCAGVKYAISYVEQVQANSEEQIYVRKEIVHNRRVVEDMKKNGIRFINDLDEAPNGATVIFSAHGVSPSVVEAAKQRGMKIGDATCPLVTRVHRKARKIKDTHQIIYIGHEGHDEAIGTMGEAEMFLVESLEDIISLKDKIDPNKPLTYLMQTTLSVADTKNIIDQISKTFPFVEHPSKDDICYATTERQEAVSLMMDKIDAMLVIGADNSSNSLRLLQLAQKSKPHSFKVSTADDLSKEYIQNNEIKILGLTAGASTPQVLVDEIISKLKIFYPNANVELFPGSRDDSMNFKLPGVLLS</sequence>
<gene>
    <name evidence="1" type="primary">ispH</name>
    <name type="synonym">lytB</name>
    <name type="ordered locus">LA_2420</name>
</gene>
<proteinExistence type="inferred from homology"/>
<keyword id="KW-0004">4Fe-4S</keyword>
<keyword id="KW-0408">Iron</keyword>
<keyword id="KW-0411">Iron-sulfur</keyword>
<keyword id="KW-0414">Isoprene biosynthesis</keyword>
<keyword id="KW-0479">Metal-binding</keyword>
<keyword id="KW-0560">Oxidoreductase</keyword>
<keyword id="KW-1185">Reference proteome</keyword>
<reference key="1">
    <citation type="journal article" date="2003" name="Nature">
        <title>Unique physiological and pathogenic features of Leptospira interrogans revealed by whole-genome sequencing.</title>
        <authorList>
            <person name="Ren S.-X."/>
            <person name="Fu G."/>
            <person name="Jiang X.-G."/>
            <person name="Zeng R."/>
            <person name="Miao Y.-G."/>
            <person name="Xu H."/>
            <person name="Zhang Y.-X."/>
            <person name="Xiong H."/>
            <person name="Lu G."/>
            <person name="Lu L.-F."/>
            <person name="Jiang H.-Q."/>
            <person name="Jia J."/>
            <person name="Tu Y.-F."/>
            <person name="Jiang J.-X."/>
            <person name="Gu W.-Y."/>
            <person name="Zhang Y.-Q."/>
            <person name="Cai Z."/>
            <person name="Sheng H.-H."/>
            <person name="Yin H.-F."/>
            <person name="Zhang Y."/>
            <person name="Zhu G.-F."/>
            <person name="Wan M."/>
            <person name="Huang H.-L."/>
            <person name="Qian Z."/>
            <person name="Wang S.-Y."/>
            <person name="Ma W."/>
            <person name="Yao Z.-J."/>
            <person name="Shen Y."/>
            <person name="Qiang B.-Q."/>
            <person name="Xia Q.-C."/>
            <person name="Guo X.-K."/>
            <person name="Danchin A."/>
            <person name="Saint Girons I."/>
            <person name="Somerville R.L."/>
            <person name="Wen Y.-M."/>
            <person name="Shi M.-H."/>
            <person name="Chen Z."/>
            <person name="Xu J.-G."/>
            <person name="Zhao G.-P."/>
        </authorList>
    </citation>
    <scope>NUCLEOTIDE SEQUENCE [LARGE SCALE GENOMIC DNA]</scope>
    <source>
        <strain>56601</strain>
    </source>
</reference>
<feature type="chain" id="PRO_0000128831" description="4-hydroxy-3-methylbut-2-enyl diphosphate reductase">
    <location>
        <begin position="1"/>
        <end position="312"/>
    </location>
</feature>
<feature type="active site" description="Proton donor" evidence="1">
    <location>
        <position position="127"/>
    </location>
</feature>
<feature type="binding site" evidence="1">
    <location>
        <position position="14"/>
    </location>
    <ligand>
        <name>[4Fe-4S] cluster</name>
        <dbReference type="ChEBI" id="CHEBI:49883"/>
    </ligand>
</feature>
<feature type="binding site" evidence="1">
    <location>
        <position position="43"/>
    </location>
    <ligand>
        <name>(2E)-4-hydroxy-3-methylbut-2-enyl diphosphate</name>
        <dbReference type="ChEBI" id="CHEBI:128753"/>
    </ligand>
</feature>
<feature type="binding site" evidence="1">
    <location>
        <position position="43"/>
    </location>
    <ligand>
        <name>dimethylallyl diphosphate</name>
        <dbReference type="ChEBI" id="CHEBI:57623"/>
    </ligand>
</feature>
<feature type="binding site" evidence="1">
    <location>
        <position position="43"/>
    </location>
    <ligand>
        <name>isopentenyl diphosphate</name>
        <dbReference type="ChEBI" id="CHEBI:128769"/>
    </ligand>
</feature>
<feature type="binding site" evidence="1">
    <location>
        <position position="76"/>
    </location>
    <ligand>
        <name>(2E)-4-hydroxy-3-methylbut-2-enyl diphosphate</name>
        <dbReference type="ChEBI" id="CHEBI:128753"/>
    </ligand>
</feature>
<feature type="binding site" evidence="1">
    <location>
        <position position="76"/>
    </location>
    <ligand>
        <name>dimethylallyl diphosphate</name>
        <dbReference type="ChEBI" id="CHEBI:57623"/>
    </ligand>
</feature>
<feature type="binding site" evidence="1">
    <location>
        <position position="76"/>
    </location>
    <ligand>
        <name>isopentenyl diphosphate</name>
        <dbReference type="ChEBI" id="CHEBI:128769"/>
    </ligand>
</feature>
<feature type="binding site" evidence="1">
    <location>
        <position position="98"/>
    </location>
    <ligand>
        <name>[4Fe-4S] cluster</name>
        <dbReference type="ChEBI" id="CHEBI:49883"/>
    </ligand>
</feature>
<feature type="binding site" evidence="1">
    <location>
        <position position="125"/>
    </location>
    <ligand>
        <name>(2E)-4-hydroxy-3-methylbut-2-enyl diphosphate</name>
        <dbReference type="ChEBI" id="CHEBI:128753"/>
    </ligand>
</feature>
<feature type="binding site" evidence="1">
    <location>
        <position position="125"/>
    </location>
    <ligand>
        <name>dimethylallyl diphosphate</name>
        <dbReference type="ChEBI" id="CHEBI:57623"/>
    </ligand>
</feature>
<feature type="binding site" evidence="1">
    <location>
        <position position="125"/>
    </location>
    <ligand>
        <name>isopentenyl diphosphate</name>
        <dbReference type="ChEBI" id="CHEBI:128769"/>
    </ligand>
</feature>
<feature type="binding site" evidence="1">
    <location>
        <position position="165"/>
    </location>
    <ligand>
        <name>(2E)-4-hydroxy-3-methylbut-2-enyl diphosphate</name>
        <dbReference type="ChEBI" id="CHEBI:128753"/>
    </ligand>
</feature>
<feature type="binding site" evidence="1">
    <location>
        <position position="195"/>
    </location>
    <ligand>
        <name>[4Fe-4S] cluster</name>
        <dbReference type="ChEBI" id="CHEBI:49883"/>
    </ligand>
</feature>
<feature type="binding site" evidence="1">
    <location>
        <position position="223"/>
    </location>
    <ligand>
        <name>(2E)-4-hydroxy-3-methylbut-2-enyl diphosphate</name>
        <dbReference type="ChEBI" id="CHEBI:128753"/>
    </ligand>
</feature>
<feature type="binding site" evidence="1">
    <location>
        <position position="223"/>
    </location>
    <ligand>
        <name>dimethylallyl diphosphate</name>
        <dbReference type="ChEBI" id="CHEBI:57623"/>
    </ligand>
</feature>
<feature type="binding site" evidence="1">
    <location>
        <position position="223"/>
    </location>
    <ligand>
        <name>isopentenyl diphosphate</name>
        <dbReference type="ChEBI" id="CHEBI:128769"/>
    </ligand>
</feature>
<feature type="binding site" evidence="1">
    <location>
        <position position="224"/>
    </location>
    <ligand>
        <name>(2E)-4-hydroxy-3-methylbut-2-enyl diphosphate</name>
        <dbReference type="ChEBI" id="CHEBI:128753"/>
    </ligand>
</feature>
<feature type="binding site" evidence="1">
    <location>
        <position position="224"/>
    </location>
    <ligand>
        <name>dimethylallyl diphosphate</name>
        <dbReference type="ChEBI" id="CHEBI:57623"/>
    </ligand>
</feature>
<feature type="binding site" evidence="1">
    <location>
        <position position="224"/>
    </location>
    <ligand>
        <name>isopentenyl diphosphate</name>
        <dbReference type="ChEBI" id="CHEBI:128769"/>
    </ligand>
</feature>
<feature type="binding site" evidence="1">
    <location>
        <position position="225"/>
    </location>
    <ligand>
        <name>(2E)-4-hydroxy-3-methylbut-2-enyl diphosphate</name>
        <dbReference type="ChEBI" id="CHEBI:128753"/>
    </ligand>
</feature>
<feature type="binding site" evidence="1">
    <location>
        <position position="225"/>
    </location>
    <ligand>
        <name>dimethylallyl diphosphate</name>
        <dbReference type="ChEBI" id="CHEBI:57623"/>
    </ligand>
</feature>
<feature type="binding site" evidence="1">
    <location>
        <position position="225"/>
    </location>
    <ligand>
        <name>isopentenyl diphosphate</name>
        <dbReference type="ChEBI" id="CHEBI:128769"/>
    </ligand>
</feature>
<feature type="binding site" evidence="1">
    <location>
        <position position="269"/>
    </location>
    <ligand>
        <name>(2E)-4-hydroxy-3-methylbut-2-enyl diphosphate</name>
        <dbReference type="ChEBI" id="CHEBI:128753"/>
    </ligand>
</feature>
<feature type="binding site" evidence="1">
    <location>
        <position position="269"/>
    </location>
    <ligand>
        <name>dimethylallyl diphosphate</name>
        <dbReference type="ChEBI" id="CHEBI:57623"/>
    </ligand>
</feature>
<feature type="binding site" evidence="1">
    <location>
        <position position="269"/>
    </location>
    <ligand>
        <name>isopentenyl diphosphate</name>
        <dbReference type="ChEBI" id="CHEBI:128769"/>
    </ligand>
</feature>
<organism>
    <name type="scientific">Leptospira interrogans serogroup Icterohaemorrhagiae serovar Lai (strain 56601)</name>
    <dbReference type="NCBI Taxonomy" id="189518"/>
    <lineage>
        <taxon>Bacteria</taxon>
        <taxon>Pseudomonadati</taxon>
        <taxon>Spirochaetota</taxon>
        <taxon>Spirochaetia</taxon>
        <taxon>Leptospirales</taxon>
        <taxon>Leptospiraceae</taxon>
        <taxon>Leptospira</taxon>
    </lineage>
</organism>